<dbReference type="EMBL" id="CP000726">
    <property type="protein sequence ID" value="ABS32467.1"/>
    <property type="molecule type" value="Genomic_DNA"/>
</dbReference>
<dbReference type="RefSeq" id="WP_011986803.1">
    <property type="nucleotide sequence ID" value="NC_009697.1"/>
</dbReference>
<dbReference type="SMR" id="A7FW10"/>
<dbReference type="KEGG" id="cba:CLB_2310"/>
<dbReference type="HOGENOM" id="CLU_077636_3_2_9"/>
<dbReference type="GO" id="GO:0005737">
    <property type="term" value="C:cytoplasm"/>
    <property type="evidence" value="ECO:0007669"/>
    <property type="project" value="UniProtKB-SubCell"/>
</dbReference>
<dbReference type="GO" id="GO:0005840">
    <property type="term" value="C:ribosome"/>
    <property type="evidence" value="ECO:0007669"/>
    <property type="project" value="InterPro"/>
</dbReference>
<dbReference type="GO" id="GO:0043022">
    <property type="term" value="F:ribosome binding"/>
    <property type="evidence" value="ECO:0007669"/>
    <property type="project" value="InterPro"/>
</dbReference>
<dbReference type="GO" id="GO:0042274">
    <property type="term" value="P:ribosomal small subunit biogenesis"/>
    <property type="evidence" value="ECO:0007669"/>
    <property type="project" value="UniProtKB-UniRule"/>
</dbReference>
<dbReference type="GO" id="GO:0006364">
    <property type="term" value="P:rRNA processing"/>
    <property type="evidence" value="ECO:0007669"/>
    <property type="project" value="UniProtKB-UniRule"/>
</dbReference>
<dbReference type="Gene3D" id="2.30.30.240">
    <property type="entry name" value="PRC-barrel domain"/>
    <property type="match status" value="1"/>
</dbReference>
<dbReference type="Gene3D" id="2.40.30.60">
    <property type="entry name" value="RimM"/>
    <property type="match status" value="1"/>
</dbReference>
<dbReference type="HAMAP" id="MF_00014">
    <property type="entry name" value="Ribosome_mat_RimM"/>
    <property type="match status" value="1"/>
</dbReference>
<dbReference type="InterPro" id="IPR011033">
    <property type="entry name" value="PRC_barrel-like_sf"/>
</dbReference>
<dbReference type="InterPro" id="IPR056792">
    <property type="entry name" value="PRC_RimM"/>
</dbReference>
<dbReference type="InterPro" id="IPR011961">
    <property type="entry name" value="RimM"/>
</dbReference>
<dbReference type="InterPro" id="IPR002676">
    <property type="entry name" value="RimM_N"/>
</dbReference>
<dbReference type="InterPro" id="IPR036976">
    <property type="entry name" value="RimM_N_sf"/>
</dbReference>
<dbReference type="InterPro" id="IPR009000">
    <property type="entry name" value="Transl_B-barrel_sf"/>
</dbReference>
<dbReference type="NCBIfam" id="TIGR02273">
    <property type="entry name" value="16S_RimM"/>
    <property type="match status" value="1"/>
</dbReference>
<dbReference type="PANTHER" id="PTHR33692">
    <property type="entry name" value="RIBOSOME MATURATION FACTOR RIMM"/>
    <property type="match status" value="1"/>
</dbReference>
<dbReference type="PANTHER" id="PTHR33692:SF1">
    <property type="entry name" value="RIBOSOME MATURATION FACTOR RIMM"/>
    <property type="match status" value="1"/>
</dbReference>
<dbReference type="Pfam" id="PF24986">
    <property type="entry name" value="PRC_RimM"/>
    <property type="match status" value="1"/>
</dbReference>
<dbReference type="Pfam" id="PF01782">
    <property type="entry name" value="RimM"/>
    <property type="match status" value="1"/>
</dbReference>
<dbReference type="SUPFAM" id="SSF50346">
    <property type="entry name" value="PRC-barrel domain"/>
    <property type="match status" value="1"/>
</dbReference>
<dbReference type="SUPFAM" id="SSF50447">
    <property type="entry name" value="Translation proteins"/>
    <property type="match status" value="1"/>
</dbReference>
<feature type="chain" id="PRO_1000001162" description="Ribosome maturation factor RimM">
    <location>
        <begin position="1"/>
        <end position="164"/>
    </location>
</feature>
<feature type="domain" description="PRC barrel" evidence="1">
    <location>
        <begin position="90"/>
        <end position="161"/>
    </location>
</feature>
<name>RIMM_CLOB1</name>
<proteinExistence type="inferred from homology"/>
<protein>
    <recommendedName>
        <fullName evidence="1">Ribosome maturation factor RimM</fullName>
    </recommendedName>
</protein>
<reference key="1">
    <citation type="journal article" date="2007" name="PLoS ONE">
        <title>Analysis of the neurotoxin complex genes in Clostridium botulinum A1-A4 and B1 strains: BoNT/A3, /Ba4 and /B1 clusters are located within plasmids.</title>
        <authorList>
            <person name="Smith T.J."/>
            <person name="Hill K.K."/>
            <person name="Foley B.T."/>
            <person name="Detter J.C."/>
            <person name="Munk A.C."/>
            <person name="Bruce D.C."/>
            <person name="Doggett N.A."/>
            <person name="Smith L.A."/>
            <person name="Marks J.D."/>
            <person name="Xie G."/>
            <person name="Brettin T.S."/>
        </authorList>
    </citation>
    <scope>NUCLEOTIDE SEQUENCE [LARGE SCALE GENOMIC DNA]</scope>
    <source>
        <strain>ATCC 19397 / Type A</strain>
    </source>
</reference>
<accession>A7FW10</accession>
<comment type="function">
    <text evidence="1">An accessory protein needed during the final step in the assembly of 30S ribosomal subunit, possibly for assembly of the head region. Essential for efficient processing of 16S rRNA. May be needed both before and after RbfA during the maturation of 16S rRNA. It has affinity for free ribosomal 30S subunits but not for 70S ribosomes.</text>
</comment>
<comment type="subunit">
    <text evidence="1">Binds ribosomal protein uS19.</text>
</comment>
<comment type="subcellular location">
    <subcellularLocation>
        <location evidence="1">Cytoplasm</location>
    </subcellularLocation>
</comment>
<comment type="domain">
    <text evidence="1">The PRC barrel domain binds ribosomal protein uS19.</text>
</comment>
<comment type="similarity">
    <text evidence="1">Belongs to the RimM family.</text>
</comment>
<evidence type="ECO:0000255" key="1">
    <source>
        <dbReference type="HAMAP-Rule" id="MF_00014"/>
    </source>
</evidence>
<sequence length="164" mass="18678">MKEFLAVGEIINTHGIKGEVKVYPLTDDMKRFKKLKEVFIDGEEKKILSCKLQPNNVVLKIEGIDSIEEANKYRKKLLEIKRENSVKLPKGSYFIADLIECRVIDEDGREIGQISDVIKTGSNDVYEVKGKSEVLVPAIKDIVTNIDIENKTVTIKPLEIWQCE</sequence>
<organism>
    <name type="scientific">Clostridium botulinum (strain ATCC 19397 / Type A)</name>
    <dbReference type="NCBI Taxonomy" id="441770"/>
    <lineage>
        <taxon>Bacteria</taxon>
        <taxon>Bacillati</taxon>
        <taxon>Bacillota</taxon>
        <taxon>Clostridia</taxon>
        <taxon>Eubacteriales</taxon>
        <taxon>Clostridiaceae</taxon>
        <taxon>Clostridium</taxon>
    </lineage>
</organism>
<keyword id="KW-0143">Chaperone</keyword>
<keyword id="KW-0963">Cytoplasm</keyword>
<keyword id="KW-0690">Ribosome biogenesis</keyword>
<keyword id="KW-0698">rRNA processing</keyword>
<gene>
    <name evidence="1" type="primary">rimM</name>
    <name type="ordered locus">CLB_2310</name>
</gene>